<protein>
    <recommendedName>
        <fullName evidence="2">Ornithine carbamoyltransferase</fullName>
        <shortName evidence="2">OTCase</shortName>
        <ecNumber evidence="2">2.1.3.3</ecNumber>
    </recommendedName>
</protein>
<organism>
    <name type="scientific">Mesorhizobium japonicum (strain LMG 29417 / CECT 9101 / MAFF 303099)</name>
    <name type="common">Mesorhizobium loti (strain MAFF 303099)</name>
    <dbReference type="NCBI Taxonomy" id="266835"/>
    <lineage>
        <taxon>Bacteria</taxon>
        <taxon>Pseudomonadati</taxon>
        <taxon>Pseudomonadota</taxon>
        <taxon>Alphaproteobacteria</taxon>
        <taxon>Hyphomicrobiales</taxon>
        <taxon>Phyllobacteriaceae</taxon>
        <taxon>Mesorhizobium</taxon>
    </lineage>
</organism>
<proteinExistence type="inferred from homology"/>
<comment type="function">
    <text evidence="1">Reversibly catalyzes the transfer of the carbamoyl group from carbamoyl phosphate (CP) to the N(epsilon) atom of ornithine (ORN) to produce L-citrulline.</text>
</comment>
<comment type="catalytic activity">
    <reaction evidence="2">
        <text>carbamoyl phosphate + L-ornithine = L-citrulline + phosphate + H(+)</text>
        <dbReference type="Rhea" id="RHEA:19513"/>
        <dbReference type="ChEBI" id="CHEBI:15378"/>
        <dbReference type="ChEBI" id="CHEBI:43474"/>
        <dbReference type="ChEBI" id="CHEBI:46911"/>
        <dbReference type="ChEBI" id="CHEBI:57743"/>
        <dbReference type="ChEBI" id="CHEBI:58228"/>
        <dbReference type="EC" id="2.1.3.3"/>
    </reaction>
</comment>
<comment type="pathway">
    <text evidence="2">Amino-acid biosynthesis; L-arginine biosynthesis; L-arginine from L-ornithine and carbamoyl phosphate: step 1/3.</text>
</comment>
<comment type="subcellular location">
    <subcellularLocation>
        <location evidence="2">Cytoplasm</location>
    </subcellularLocation>
</comment>
<comment type="similarity">
    <text evidence="2">Belongs to the aspartate/ornithine carbamoyltransferase superfamily. OTCase family.</text>
</comment>
<gene>
    <name evidence="2" type="primary">argF</name>
    <name type="ordered locus">mlr5647</name>
</gene>
<accession>Q98BB6</accession>
<reference key="1">
    <citation type="journal article" date="2000" name="DNA Res.">
        <title>Complete genome structure of the nitrogen-fixing symbiotic bacterium Mesorhizobium loti.</title>
        <authorList>
            <person name="Kaneko T."/>
            <person name="Nakamura Y."/>
            <person name="Sato S."/>
            <person name="Asamizu E."/>
            <person name="Kato T."/>
            <person name="Sasamoto S."/>
            <person name="Watanabe A."/>
            <person name="Idesawa K."/>
            <person name="Ishikawa A."/>
            <person name="Kawashima K."/>
            <person name="Kimura T."/>
            <person name="Kishida Y."/>
            <person name="Kiyokawa C."/>
            <person name="Kohara M."/>
            <person name="Matsumoto M."/>
            <person name="Matsuno A."/>
            <person name="Mochizuki Y."/>
            <person name="Nakayama S."/>
            <person name="Nakazaki N."/>
            <person name="Shimpo S."/>
            <person name="Sugimoto M."/>
            <person name="Takeuchi C."/>
            <person name="Yamada M."/>
            <person name="Tabata S."/>
        </authorList>
    </citation>
    <scope>NUCLEOTIDE SEQUENCE [LARGE SCALE GENOMIC DNA]</scope>
    <source>
        <strain>LMG 29417 / CECT 9101 / MAFF 303099</strain>
    </source>
</reference>
<keyword id="KW-0028">Amino-acid biosynthesis</keyword>
<keyword id="KW-0055">Arginine biosynthesis</keyword>
<keyword id="KW-0963">Cytoplasm</keyword>
<keyword id="KW-0808">Transferase</keyword>
<sequence length="303" mass="33547">MSVRHFTDLSTVSEGDLRFMLDDAVVRKARLKAGERTRPLEGKVLAMIFDKPSTRTRVSFDVGMRQLGGETIMLTGTEMQLGRSETIADTAKVLSRYVDAIMIRTTSHDRLLELTENATVPVINGLTDDTHPCQLMADIMTFEEHRGPVAGKTIAWTGDGNNVLHSLLEASARFRFNLNVAVPEGSEPAQKHIDWSKAHGGKLHFTRSPEEAVDQADCVVTDCWVSMGQEHRARGHNVFSPYQVNAKLMAHAKPDALFMHCLPAHRGEEVTDEVIDGPHSVVFDEAENRLHAQKAVLAWCLGA</sequence>
<name>OTC_RHILO</name>
<dbReference type="EC" id="2.1.3.3" evidence="2"/>
<dbReference type="EMBL" id="BA000012">
    <property type="protein sequence ID" value="BAB52056.1"/>
    <property type="molecule type" value="Genomic_DNA"/>
</dbReference>
<dbReference type="RefSeq" id="WP_010913394.1">
    <property type="nucleotide sequence ID" value="NC_002678.2"/>
</dbReference>
<dbReference type="SMR" id="Q98BB6"/>
<dbReference type="KEGG" id="mlo:mlr5647"/>
<dbReference type="PATRIC" id="fig|266835.9.peg.4488"/>
<dbReference type="eggNOG" id="COG0078">
    <property type="taxonomic scope" value="Bacteria"/>
</dbReference>
<dbReference type="HOGENOM" id="CLU_043846_3_2_5"/>
<dbReference type="BRENDA" id="2.1.3.3">
    <property type="organism ID" value="3243"/>
</dbReference>
<dbReference type="UniPathway" id="UPA00068">
    <property type="reaction ID" value="UER00112"/>
</dbReference>
<dbReference type="Proteomes" id="UP000000552">
    <property type="component" value="Chromosome"/>
</dbReference>
<dbReference type="GO" id="GO:0005737">
    <property type="term" value="C:cytoplasm"/>
    <property type="evidence" value="ECO:0007669"/>
    <property type="project" value="UniProtKB-SubCell"/>
</dbReference>
<dbReference type="GO" id="GO:0016597">
    <property type="term" value="F:amino acid binding"/>
    <property type="evidence" value="ECO:0007669"/>
    <property type="project" value="InterPro"/>
</dbReference>
<dbReference type="GO" id="GO:0004585">
    <property type="term" value="F:ornithine carbamoyltransferase activity"/>
    <property type="evidence" value="ECO:0007669"/>
    <property type="project" value="UniProtKB-UniRule"/>
</dbReference>
<dbReference type="GO" id="GO:0042450">
    <property type="term" value="P:arginine biosynthetic process via ornithine"/>
    <property type="evidence" value="ECO:0007669"/>
    <property type="project" value="TreeGrafter"/>
</dbReference>
<dbReference type="GO" id="GO:0019240">
    <property type="term" value="P:citrulline biosynthetic process"/>
    <property type="evidence" value="ECO:0007669"/>
    <property type="project" value="TreeGrafter"/>
</dbReference>
<dbReference type="GO" id="GO:0006526">
    <property type="term" value="P:L-arginine biosynthetic process"/>
    <property type="evidence" value="ECO:0007669"/>
    <property type="project" value="UniProtKB-UniRule"/>
</dbReference>
<dbReference type="FunFam" id="3.40.50.1370:FF:000008">
    <property type="entry name" value="Ornithine carbamoyltransferase"/>
    <property type="match status" value="1"/>
</dbReference>
<dbReference type="Gene3D" id="3.40.50.1370">
    <property type="entry name" value="Aspartate/ornithine carbamoyltransferase"/>
    <property type="match status" value="2"/>
</dbReference>
<dbReference type="HAMAP" id="MF_01109">
    <property type="entry name" value="OTCase"/>
    <property type="match status" value="1"/>
</dbReference>
<dbReference type="InterPro" id="IPR006132">
    <property type="entry name" value="Asp/Orn_carbamoyltranf_P-bd"/>
</dbReference>
<dbReference type="InterPro" id="IPR006130">
    <property type="entry name" value="Asp/Orn_carbamoylTrfase"/>
</dbReference>
<dbReference type="InterPro" id="IPR036901">
    <property type="entry name" value="Asp/Orn_carbamoylTrfase_sf"/>
</dbReference>
<dbReference type="InterPro" id="IPR006131">
    <property type="entry name" value="Asp_carbamoyltransf_Asp/Orn-bd"/>
</dbReference>
<dbReference type="InterPro" id="IPR002292">
    <property type="entry name" value="Orn/put_carbamltrans"/>
</dbReference>
<dbReference type="InterPro" id="IPR024904">
    <property type="entry name" value="OTCase_ArgI"/>
</dbReference>
<dbReference type="NCBIfam" id="TIGR00658">
    <property type="entry name" value="orni_carb_tr"/>
    <property type="match status" value="1"/>
</dbReference>
<dbReference type="NCBIfam" id="NF001986">
    <property type="entry name" value="PRK00779.1"/>
    <property type="match status" value="1"/>
</dbReference>
<dbReference type="PANTHER" id="PTHR45753">
    <property type="entry name" value="ORNITHINE CARBAMOYLTRANSFERASE, MITOCHONDRIAL"/>
    <property type="match status" value="1"/>
</dbReference>
<dbReference type="PANTHER" id="PTHR45753:SF3">
    <property type="entry name" value="ORNITHINE TRANSCARBAMYLASE, MITOCHONDRIAL"/>
    <property type="match status" value="1"/>
</dbReference>
<dbReference type="Pfam" id="PF00185">
    <property type="entry name" value="OTCace"/>
    <property type="match status" value="1"/>
</dbReference>
<dbReference type="Pfam" id="PF02729">
    <property type="entry name" value="OTCace_N"/>
    <property type="match status" value="1"/>
</dbReference>
<dbReference type="PRINTS" id="PR00100">
    <property type="entry name" value="AOTCASE"/>
</dbReference>
<dbReference type="PRINTS" id="PR00102">
    <property type="entry name" value="OTCASE"/>
</dbReference>
<dbReference type="SUPFAM" id="SSF53671">
    <property type="entry name" value="Aspartate/ornithine carbamoyltransferase"/>
    <property type="match status" value="1"/>
</dbReference>
<dbReference type="PROSITE" id="PS00097">
    <property type="entry name" value="CARBAMOYLTRANSFERASE"/>
    <property type="match status" value="1"/>
</dbReference>
<feature type="chain" id="PRO_0000112997" description="Ornithine carbamoyltransferase">
    <location>
        <begin position="1"/>
        <end position="303"/>
    </location>
</feature>
<feature type="binding site" evidence="2">
    <location>
        <begin position="53"/>
        <end position="56"/>
    </location>
    <ligand>
        <name>carbamoyl phosphate</name>
        <dbReference type="ChEBI" id="CHEBI:58228"/>
    </ligand>
</feature>
<feature type="binding site" evidence="2">
    <location>
        <position position="80"/>
    </location>
    <ligand>
        <name>carbamoyl phosphate</name>
        <dbReference type="ChEBI" id="CHEBI:58228"/>
    </ligand>
</feature>
<feature type="binding site" evidence="2">
    <location>
        <position position="104"/>
    </location>
    <ligand>
        <name>carbamoyl phosphate</name>
        <dbReference type="ChEBI" id="CHEBI:58228"/>
    </ligand>
</feature>
<feature type="binding site" evidence="2">
    <location>
        <begin position="131"/>
        <end position="134"/>
    </location>
    <ligand>
        <name>carbamoyl phosphate</name>
        <dbReference type="ChEBI" id="CHEBI:58228"/>
    </ligand>
</feature>
<feature type="binding site" evidence="2">
    <location>
        <position position="162"/>
    </location>
    <ligand>
        <name>L-ornithine</name>
        <dbReference type="ChEBI" id="CHEBI:46911"/>
    </ligand>
</feature>
<feature type="binding site" evidence="2">
    <location>
        <position position="222"/>
    </location>
    <ligand>
        <name>L-ornithine</name>
        <dbReference type="ChEBI" id="CHEBI:46911"/>
    </ligand>
</feature>
<feature type="binding site" evidence="2">
    <location>
        <begin position="226"/>
        <end position="227"/>
    </location>
    <ligand>
        <name>L-ornithine</name>
        <dbReference type="ChEBI" id="CHEBI:46911"/>
    </ligand>
</feature>
<feature type="binding site" evidence="2">
    <location>
        <begin position="261"/>
        <end position="262"/>
    </location>
    <ligand>
        <name>carbamoyl phosphate</name>
        <dbReference type="ChEBI" id="CHEBI:58228"/>
    </ligand>
</feature>
<feature type="binding site" evidence="2">
    <location>
        <position position="289"/>
    </location>
    <ligand>
        <name>carbamoyl phosphate</name>
        <dbReference type="ChEBI" id="CHEBI:58228"/>
    </ligand>
</feature>
<evidence type="ECO:0000250" key="1"/>
<evidence type="ECO:0000255" key="2">
    <source>
        <dbReference type="HAMAP-Rule" id="MF_01109"/>
    </source>
</evidence>